<proteinExistence type="inferred from homology"/>
<evidence type="ECO:0000255" key="1">
    <source>
        <dbReference type="HAMAP-Rule" id="MF_00551"/>
    </source>
</evidence>
<reference key="1">
    <citation type="submission" date="2009-02" db="EMBL/GenBank/DDBJ databases">
        <title>Vibrio splendidus str. LGP32 complete genome.</title>
        <authorList>
            <person name="Mazel D."/>
            <person name="Le Roux F."/>
        </authorList>
    </citation>
    <scope>NUCLEOTIDE SEQUENCE [LARGE SCALE GENOMIC DNA]</scope>
    <source>
        <strain>LGP32</strain>
    </source>
</reference>
<accession>B7VLX0</accession>
<sequence length="213" mass="24147">MSDNNQCVIVGIAGASASGKSLIASTIYNELREKVGDHQIGVITEDCYYSDQSHLSMEERVKTNYDHPNALDHDLLCEHLQQLMSGNAVEVPEYSYTEHTRTSETTTLTPKKVIILEGILLLTDPRLRKLMHASVFMDTPLDICLLRRVKRDVEERGRTMDTVLKQYQETVRPMFMQFIEPSKQHADIIVPRGGKNRIAIDVLKAHIAKLLKS</sequence>
<name>URK_VIBA3</name>
<keyword id="KW-0067">ATP-binding</keyword>
<keyword id="KW-0963">Cytoplasm</keyword>
<keyword id="KW-0418">Kinase</keyword>
<keyword id="KW-0547">Nucleotide-binding</keyword>
<keyword id="KW-0808">Transferase</keyword>
<dbReference type="EC" id="2.7.1.48" evidence="1"/>
<dbReference type="EMBL" id="FM954972">
    <property type="protein sequence ID" value="CAV18062.1"/>
    <property type="molecule type" value="Genomic_DNA"/>
</dbReference>
<dbReference type="SMR" id="B7VLX0"/>
<dbReference type="STRING" id="575788.VS_1011"/>
<dbReference type="KEGG" id="vsp:VS_1011"/>
<dbReference type="eggNOG" id="COG0572">
    <property type="taxonomic scope" value="Bacteria"/>
</dbReference>
<dbReference type="HOGENOM" id="CLU_021278_1_2_6"/>
<dbReference type="UniPathway" id="UPA00574">
    <property type="reaction ID" value="UER00637"/>
</dbReference>
<dbReference type="UniPathway" id="UPA00579">
    <property type="reaction ID" value="UER00640"/>
</dbReference>
<dbReference type="Proteomes" id="UP000009100">
    <property type="component" value="Chromosome 1"/>
</dbReference>
<dbReference type="GO" id="GO:0005737">
    <property type="term" value="C:cytoplasm"/>
    <property type="evidence" value="ECO:0007669"/>
    <property type="project" value="UniProtKB-SubCell"/>
</dbReference>
<dbReference type="GO" id="GO:0005524">
    <property type="term" value="F:ATP binding"/>
    <property type="evidence" value="ECO:0007669"/>
    <property type="project" value="UniProtKB-UniRule"/>
</dbReference>
<dbReference type="GO" id="GO:0043771">
    <property type="term" value="F:cytidine kinase activity"/>
    <property type="evidence" value="ECO:0007669"/>
    <property type="project" value="RHEA"/>
</dbReference>
<dbReference type="GO" id="GO:0004849">
    <property type="term" value="F:uridine kinase activity"/>
    <property type="evidence" value="ECO:0007669"/>
    <property type="project" value="UniProtKB-UniRule"/>
</dbReference>
<dbReference type="GO" id="GO:0044211">
    <property type="term" value="P:CTP salvage"/>
    <property type="evidence" value="ECO:0007669"/>
    <property type="project" value="UniProtKB-UniRule"/>
</dbReference>
<dbReference type="GO" id="GO:0044206">
    <property type="term" value="P:UMP salvage"/>
    <property type="evidence" value="ECO:0007669"/>
    <property type="project" value="UniProtKB-UniRule"/>
</dbReference>
<dbReference type="CDD" id="cd02023">
    <property type="entry name" value="UMPK"/>
    <property type="match status" value="1"/>
</dbReference>
<dbReference type="FunFam" id="3.40.50.300:FF:000252">
    <property type="entry name" value="Uridine kinase"/>
    <property type="match status" value="1"/>
</dbReference>
<dbReference type="Gene3D" id="3.40.50.300">
    <property type="entry name" value="P-loop containing nucleotide triphosphate hydrolases"/>
    <property type="match status" value="1"/>
</dbReference>
<dbReference type="HAMAP" id="MF_00551">
    <property type="entry name" value="Uridine_kinase"/>
    <property type="match status" value="1"/>
</dbReference>
<dbReference type="InterPro" id="IPR027417">
    <property type="entry name" value="P-loop_NTPase"/>
</dbReference>
<dbReference type="InterPro" id="IPR006083">
    <property type="entry name" value="PRK/URK"/>
</dbReference>
<dbReference type="InterPro" id="IPR026008">
    <property type="entry name" value="Uridine_kinase"/>
</dbReference>
<dbReference type="InterPro" id="IPR000764">
    <property type="entry name" value="Uridine_kinase-like"/>
</dbReference>
<dbReference type="NCBIfam" id="NF004018">
    <property type="entry name" value="PRK05480.1"/>
    <property type="match status" value="1"/>
</dbReference>
<dbReference type="NCBIfam" id="TIGR00235">
    <property type="entry name" value="udk"/>
    <property type="match status" value="1"/>
</dbReference>
<dbReference type="PANTHER" id="PTHR10285">
    <property type="entry name" value="URIDINE KINASE"/>
    <property type="match status" value="1"/>
</dbReference>
<dbReference type="Pfam" id="PF00485">
    <property type="entry name" value="PRK"/>
    <property type="match status" value="1"/>
</dbReference>
<dbReference type="PRINTS" id="PR00988">
    <property type="entry name" value="URIDINKINASE"/>
</dbReference>
<dbReference type="SUPFAM" id="SSF52540">
    <property type="entry name" value="P-loop containing nucleoside triphosphate hydrolases"/>
    <property type="match status" value="1"/>
</dbReference>
<gene>
    <name evidence="1" type="primary">udk</name>
    <name type="ordered locus">VS_1011</name>
</gene>
<organism>
    <name type="scientific">Vibrio atlanticus (strain LGP32)</name>
    <name type="common">Vibrio splendidus (strain Mel32)</name>
    <dbReference type="NCBI Taxonomy" id="575788"/>
    <lineage>
        <taxon>Bacteria</taxon>
        <taxon>Pseudomonadati</taxon>
        <taxon>Pseudomonadota</taxon>
        <taxon>Gammaproteobacteria</taxon>
        <taxon>Vibrionales</taxon>
        <taxon>Vibrionaceae</taxon>
        <taxon>Vibrio</taxon>
    </lineage>
</organism>
<feature type="chain" id="PRO_1000200528" description="Uridine kinase">
    <location>
        <begin position="1"/>
        <end position="213"/>
    </location>
</feature>
<feature type="binding site" evidence="1">
    <location>
        <begin position="14"/>
        <end position="21"/>
    </location>
    <ligand>
        <name>ATP</name>
        <dbReference type="ChEBI" id="CHEBI:30616"/>
    </ligand>
</feature>
<comment type="catalytic activity">
    <reaction evidence="1">
        <text>uridine + ATP = UMP + ADP + H(+)</text>
        <dbReference type="Rhea" id="RHEA:16825"/>
        <dbReference type="ChEBI" id="CHEBI:15378"/>
        <dbReference type="ChEBI" id="CHEBI:16704"/>
        <dbReference type="ChEBI" id="CHEBI:30616"/>
        <dbReference type="ChEBI" id="CHEBI:57865"/>
        <dbReference type="ChEBI" id="CHEBI:456216"/>
        <dbReference type="EC" id="2.7.1.48"/>
    </reaction>
</comment>
<comment type="catalytic activity">
    <reaction evidence="1">
        <text>cytidine + ATP = CMP + ADP + H(+)</text>
        <dbReference type="Rhea" id="RHEA:24674"/>
        <dbReference type="ChEBI" id="CHEBI:15378"/>
        <dbReference type="ChEBI" id="CHEBI:17562"/>
        <dbReference type="ChEBI" id="CHEBI:30616"/>
        <dbReference type="ChEBI" id="CHEBI:60377"/>
        <dbReference type="ChEBI" id="CHEBI:456216"/>
        <dbReference type="EC" id="2.7.1.48"/>
    </reaction>
</comment>
<comment type="pathway">
    <text evidence="1">Pyrimidine metabolism; CTP biosynthesis via salvage pathway; CTP from cytidine: step 1/3.</text>
</comment>
<comment type="pathway">
    <text evidence="1">Pyrimidine metabolism; UMP biosynthesis via salvage pathway; UMP from uridine: step 1/1.</text>
</comment>
<comment type="subcellular location">
    <subcellularLocation>
        <location evidence="1">Cytoplasm</location>
    </subcellularLocation>
</comment>
<comment type="similarity">
    <text evidence="1">Belongs to the uridine kinase family.</text>
</comment>
<protein>
    <recommendedName>
        <fullName evidence="1">Uridine kinase</fullName>
        <ecNumber evidence="1">2.7.1.48</ecNumber>
    </recommendedName>
    <alternativeName>
        <fullName evidence="1">Cytidine monophosphokinase</fullName>
    </alternativeName>
    <alternativeName>
        <fullName evidence="1">Uridine monophosphokinase</fullName>
    </alternativeName>
</protein>